<keyword id="KW-0067">ATP-binding</keyword>
<keyword id="KW-0963">Cytoplasm</keyword>
<keyword id="KW-0235">DNA replication</keyword>
<keyword id="KW-0238">DNA-binding</keyword>
<keyword id="KW-0446">Lipid-binding</keyword>
<keyword id="KW-0547">Nucleotide-binding</keyword>
<keyword id="KW-1185">Reference proteome</keyword>
<gene>
    <name evidence="1" type="primary">dnaA</name>
    <name type="ordered locus">EF_0001</name>
</gene>
<feature type="chain" id="PRO_0000114178" description="Chromosomal replication initiator protein DnaA">
    <location>
        <begin position="1"/>
        <end position="447"/>
    </location>
</feature>
<feature type="region of interest" description="Domain I, interacts with DnaA modulators" evidence="1">
    <location>
        <begin position="1"/>
        <end position="74"/>
    </location>
</feature>
<feature type="region of interest" description="Domain II" evidence="1">
    <location>
        <begin position="74"/>
        <end position="109"/>
    </location>
</feature>
<feature type="region of interest" description="Domain III, AAA+ region" evidence="1">
    <location>
        <begin position="110"/>
        <end position="326"/>
    </location>
</feature>
<feature type="region of interest" description="Domain IV, binds dsDNA" evidence="1">
    <location>
        <begin position="327"/>
        <end position="447"/>
    </location>
</feature>
<feature type="binding site" evidence="1">
    <location>
        <position position="154"/>
    </location>
    <ligand>
        <name>ATP</name>
        <dbReference type="ChEBI" id="CHEBI:30616"/>
    </ligand>
</feature>
<feature type="binding site" evidence="1">
    <location>
        <position position="156"/>
    </location>
    <ligand>
        <name>ATP</name>
        <dbReference type="ChEBI" id="CHEBI:30616"/>
    </ligand>
</feature>
<feature type="binding site" evidence="1">
    <location>
        <position position="157"/>
    </location>
    <ligand>
        <name>ATP</name>
        <dbReference type="ChEBI" id="CHEBI:30616"/>
    </ligand>
</feature>
<feature type="binding site" evidence="1">
    <location>
        <position position="158"/>
    </location>
    <ligand>
        <name>ATP</name>
        <dbReference type="ChEBI" id="CHEBI:30616"/>
    </ligand>
</feature>
<dbReference type="EMBL" id="AE016830">
    <property type="protein sequence ID" value="AAO79886.1"/>
    <property type="molecule type" value="Genomic_DNA"/>
</dbReference>
<dbReference type="RefSeq" id="NP_813814.1">
    <property type="nucleotide sequence ID" value="NC_004668.1"/>
</dbReference>
<dbReference type="RefSeq" id="WP_002356013.1">
    <property type="nucleotide sequence ID" value="NZ_KE136524.1"/>
</dbReference>
<dbReference type="SMR" id="Q839Z5"/>
<dbReference type="STRING" id="226185.EF_0001"/>
<dbReference type="EnsemblBacteria" id="AAO79886">
    <property type="protein sequence ID" value="AAO79886"/>
    <property type="gene ID" value="EF_0001"/>
</dbReference>
<dbReference type="GeneID" id="60892564"/>
<dbReference type="KEGG" id="efa:EF0001"/>
<dbReference type="PATRIC" id="fig|226185.45.peg.253"/>
<dbReference type="eggNOG" id="COG0593">
    <property type="taxonomic scope" value="Bacteria"/>
</dbReference>
<dbReference type="HOGENOM" id="CLU_026910_3_1_9"/>
<dbReference type="Proteomes" id="UP000001415">
    <property type="component" value="Chromosome"/>
</dbReference>
<dbReference type="GO" id="GO:0005737">
    <property type="term" value="C:cytoplasm"/>
    <property type="evidence" value="ECO:0007669"/>
    <property type="project" value="UniProtKB-SubCell"/>
</dbReference>
<dbReference type="GO" id="GO:0005886">
    <property type="term" value="C:plasma membrane"/>
    <property type="evidence" value="ECO:0007669"/>
    <property type="project" value="TreeGrafter"/>
</dbReference>
<dbReference type="GO" id="GO:0005524">
    <property type="term" value="F:ATP binding"/>
    <property type="evidence" value="ECO:0007669"/>
    <property type="project" value="UniProtKB-UniRule"/>
</dbReference>
<dbReference type="GO" id="GO:0016887">
    <property type="term" value="F:ATP hydrolysis activity"/>
    <property type="evidence" value="ECO:0007669"/>
    <property type="project" value="InterPro"/>
</dbReference>
<dbReference type="GO" id="GO:0003688">
    <property type="term" value="F:DNA replication origin binding"/>
    <property type="evidence" value="ECO:0007669"/>
    <property type="project" value="UniProtKB-UniRule"/>
</dbReference>
<dbReference type="GO" id="GO:0008289">
    <property type="term" value="F:lipid binding"/>
    <property type="evidence" value="ECO:0007669"/>
    <property type="project" value="UniProtKB-KW"/>
</dbReference>
<dbReference type="GO" id="GO:0006270">
    <property type="term" value="P:DNA replication initiation"/>
    <property type="evidence" value="ECO:0007669"/>
    <property type="project" value="UniProtKB-UniRule"/>
</dbReference>
<dbReference type="GO" id="GO:0006275">
    <property type="term" value="P:regulation of DNA replication"/>
    <property type="evidence" value="ECO:0007669"/>
    <property type="project" value="UniProtKB-UniRule"/>
</dbReference>
<dbReference type="CDD" id="cd00009">
    <property type="entry name" value="AAA"/>
    <property type="match status" value="1"/>
</dbReference>
<dbReference type="CDD" id="cd06571">
    <property type="entry name" value="Bac_DnaA_C"/>
    <property type="match status" value="1"/>
</dbReference>
<dbReference type="FunFam" id="1.10.1750.10:FF:000002">
    <property type="entry name" value="Chromosomal replication initiator protein DnaA"/>
    <property type="match status" value="1"/>
</dbReference>
<dbReference type="FunFam" id="1.10.8.60:FF:000003">
    <property type="entry name" value="Chromosomal replication initiator protein DnaA"/>
    <property type="match status" value="1"/>
</dbReference>
<dbReference type="FunFam" id="3.40.50.300:FF:000150">
    <property type="entry name" value="Chromosomal replication initiator protein DnaA"/>
    <property type="match status" value="1"/>
</dbReference>
<dbReference type="Gene3D" id="1.10.1750.10">
    <property type="match status" value="1"/>
</dbReference>
<dbReference type="Gene3D" id="1.10.8.60">
    <property type="match status" value="1"/>
</dbReference>
<dbReference type="Gene3D" id="3.30.300.180">
    <property type="match status" value="1"/>
</dbReference>
<dbReference type="Gene3D" id="3.40.50.300">
    <property type="entry name" value="P-loop containing nucleotide triphosphate hydrolases"/>
    <property type="match status" value="1"/>
</dbReference>
<dbReference type="HAMAP" id="MF_00377">
    <property type="entry name" value="DnaA_bact"/>
    <property type="match status" value="1"/>
</dbReference>
<dbReference type="InterPro" id="IPR003593">
    <property type="entry name" value="AAA+_ATPase"/>
</dbReference>
<dbReference type="InterPro" id="IPR001957">
    <property type="entry name" value="Chromosome_initiator_DnaA"/>
</dbReference>
<dbReference type="InterPro" id="IPR020591">
    <property type="entry name" value="Chromosome_initiator_DnaA-like"/>
</dbReference>
<dbReference type="InterPro" id="IPR018312">
    <property type="entry name" value="Chromosome_initiator_DnaA_CS"/>
</dbReference>
<dbReference type="InterPro" id="IPR013159">
    <property type="entry name" value="DnaA_C"/>
</dbReference>
<dbReference type="InterPro" id="IPR013317">
    <property type="entry name" value="DnaA_dom"/>
</dbReference>
<dbReference type="InterPro" id="IPR024633">
    <property type="entry name" value="DnaA_N_dom"/>
</dbReference>
<dbReference type="InterPro" id="IPR038454">
    <property type="entry name" value="DnaA_N_sf"/>
</dbReference>
<dbReference type="InterPro" id="IPR027417">
    <property type="entry name" value="P-loop_NTPase"/>
</dbReference>
<dbReference type="InterPro" id="IPR010921">
    <property type="entry name" value="Trp_repressor/repl_initiator"/>
</dbReference>
<dbReference type="NCBIfam" id="TIGR00362">
    <property type="entry name" value="DnaA"/>
    <property type="match status" value="1"/>
</dbReference>
<dbReference type="PANTHER" id="PTHR30050">
    <property type="entry name" value="CHROMOSOMAL REPLICATION INITIATOR PROTEIN DNAA"/>
    <property type="match status" value="1"/>
</dbReference>
<dbReference type="PANTHER" id="PTHR30050:SF2">
    <property type="entry name" value="CHROMOSOMAL REPLICATION INITIATOR PROTEIN DNAA"/>
    <property type="match status" value="1"/>
</dbReference>
<dbReference type="Pfam" id="PF00308">
    <property type="entry name" value="Bac_DnaA"/>
    <property type="match status" value="1"/>
</dbReference>
<dbReference type="Pfam" id="PF08299">
    <property type="entry name" value="Bac_DnaA_C"/>
    <property type="match status" value="1"/>
</dbReference>
<dbReference type="Pfam" id="PF11638">
    <property type="entry name" value="DnaA_N"/>
    <property type="match status" value="1"/>
</dbReference>
<dbReference type="PRINTS" id="PR00051">
    <property type="entry name" value="DNAA"/>
</dbReference>
<dbReference type="SMART" id="SM00382">
    <property type="entry name" value="AAA"/>
    <property type="match status" value="1"/>
</dbReference>
<dbReference type="SMART" id="SM00760">
    <property type="entry name" value="Bac_DnaA_C"/>
    <property type="match status" value="1"/>
</dbReference>
<dbReference type="SUPFAM" id="SSF52540">
    <property type="entry name" value="P-loop containing nucleoside triphosphate hydrolases"/>
    <property type="match status" value="1"/>
</dbReference>
<dbReference type="SUPFAM" id="SSF48295">
    <property type="entry name" value="TrpR-like"/>
    <property type="match status" value="1"/>
</dbReference>
<dbReference type="PROSITE" id="PS01008">
    <property type="entry name" value="DNAA"/>
    <property type="match status" value="1"/>
</dbReference>
<accession>Q839Z5</accession>
<name>DNAA_ENTFA</name>
<comment type="function">
    <text evidence="1">Plays an essential role in the initiation and regulation of chromosomal replication. ATP-DnaA binds to the origin of replication (oriC) to initiate formation of the DNA replication initiation complex once per cell cycle. Binds the DnaA box (a 9 base pair repeat at the origin) and separates the double-stranded (ds)DNA. Forms a right-handed helical filament on oriC DNA; dsDNA binds to the exterior of the filament while single-stranded (ss)DNA is stabiized in the filament's interior. The ATP-DnaA-oriC complex binds and stabilizes one strand of the AT-rich DNA unwinding element (DUE), permitting loading of DNA polymerase. After initiation quickly degrades to an ADP-DnaA complex that is not apt for DNA replication. Binds acidic phospholipids.</text>
</comment>
<comment type="function">
    <text evidence="2">Strand separation requires the DnaA boxes and adjacent DnaA-trio motifs as well as ATP.</text>
</comment>
<comment type="subunit">
    <text evidence="1">Oligomerizes as a right-handed, spiral filament on DNA at oriC.</text>
</comment>
<comment type="subcellular location">
    <subcellularLocation>
        <location evidence="1">Cytoplasm</location>
    </subcellularLocation>
</comment>
<comment type="domain">
    <text evidence="1">Domain I is involved in oligomerization and binding regulators, domain II is flexibile and of varying length in different bacteria, domain III forms the AAA+ region, while domain IV binds dsDNA.</text>
</comment>
<comment type="similarity">
    <text evidence="1">Belongs to the DnaA family.</text>
</comment>
<organism>
    <name type="scientific">Enterococcus faecalis (strain ATCC 700802 / V583)</name>
    <dbReference type="NCBI Taxonomy" id="226185"/>
    <lineage>
        <taxon>Bacteria</taxon>
        <taxon>Bacillati</taxon>
        <taxon>Bacillota</taxon>
        <taxon>Bacilli</taxon>
        <taxon>Lactobacillales</taxon>
        <taxon>Enterococcaceae</taxon>
        <taxon>Enterococcus</taxon>
    </lineage>
</organism>
<reference key="1">
    <citation type="journal article" date="2003" name="Science">
        <title>Role of mobile DNA in the evolution of vancomycin-resistant Enterococcus faecalis.</title>
        <authorList>
            <person name="Paulsen I.T."/>
            <person name="Banerjei L."/>
            <person name="Myers G.S.A."/>
            <person name="Nelson K.E."/>
            <person name="Seshadri R."/>
            <person name="Read T.D."/>
            <person name="Fouts D.E."/>
            <person name="Eisen J.A."/>
            <person name="Gill S.R."/>
            <person name="Heidelberg J.F."/>
            <person name="Tettelin H."/>
            <person name="Dodson R.J."/>
            <person name="Umayam L.A."/>
            <person name="Brinkac L.M."/>
            <person name="Beanan M.J."/>
            <person name="Daugherty S.C."/>
            <person name="DeBoy R.T."/>
            <person name="Durkin S.A."/>
            <person name="Kolonay J.F."/>
            <person name="Madupu R."/>
            <person name="Nelson W.C."/>
            <person name="Vamathevan J.J."/>
            <person name="Tran B."/>
            <person name="Upton J."/>
            <person name="Hansen T."/>
            <person name="Shetty J."/>
            <person name="Khouri H.M."/>
            <person name="Utterback T.R."/>
            <person name="Radune D."/>
            <person name="Ketchum K.A."/>
            <person name="Dougherty B.A."/>
            <person name="Fraser C.M."/>
        </authorList>
    </citation>
    <scope>NUCLEOTIDE SEQUENCE [LARGE SCALE GENOMIC DNA]</scope>
    <source>
        <strain>ATCC 700802 / V583</strain>
    </source>
</reference>
<reference key="2">
    <citation type="journal article" date="2021" name="Nucleic Acids Res.">
        <title>Evidence for a chromosome origin unwinding system broadly conserved in bacteria.</title>
        <authorList>
            <person name="Pelliciari S."/>
            <person name="Dong M.J."/>
            <person name="Gao F."/>
            <person name="Murray H."/>
        </authorList>
    </citation>
    <scope>FUNCTION</scope>
    <scope>ATP-BINDING</scope>
</reference>
<proteinExistence type="evidence at protein level"/>
<sequence>MPDVESFWHSLEEAYQAILSAPSFDAWIKTTRPLKLDNNQLWLEVPSAVHRDYWEKNLSAKIVETGFKLTGAEVMPHFVVADEKDAALAQELEEPAEEEVVFSEQSKKAMLNPKYTFDTFVIGKGNQMAHAAALVVAEDPGSIYNPLFFYGGVGLGKTHLMHAIGHQMLVNQPDAKVKYVSSETFTNEFINSIQTKTSEQFRKEYRNVDLLLVDDIQFLAEKEATLEEFFHTFNDLYNENKQIVLTSDRPPNDIPKLPERLVSRFAWGLSVDITPPDLETRIAILRKKADAERLEIPDDTLSYIAGQIDSNIRELEGALVRVQAFATINGEDITTSLAADALKSLKSVGSKNQLSILQIQEEVSKYYHVPLKDLKGKKRVKTIVVPRQISMYLAREMTDNSLPKIGAEFGGKDHTTVIHAHEKIQQLLEKDPAIQKEVSEIKNLLNS</sequence>
<evidence type="ECO:0000255" key="1">
    <source>
        <dbReference type="HAMAP-Rule" id="MF_00377"/>
    </source>
</evidence>
<evidence type="ECO:0000269" key="2">
    <source>
    </source>
</evidence>
<protein>
    <recommendedName>
        <fullName evidence="1">Chromosomal replication initiator protein DnaA</fullName>
    </recommendedName>
</protein>